<organism>
    <name type="scientific">Synechococcus elongatus (strain ATCC 33912 / PCC 7942 / FACHB-805)</name>
    <name type="common">Anacystis nidulans R2</name>
    <dbReference type="NCBI Taxonomy" id="1140"/>
    <lineage>
        <taxon>Bacteria</taxon>
        <taxon>Bacillati</taxon>
        <taxon>Cyanobacteriota</taxon>
        <taxon>Cyanophyceae</taxon>
        <taxon>Synechococcales</taxon>
        <taxon>Synechococcaceae</taxon>
        <taxon>Synechococcus</taxon>
    </lineage>
</organism>
<accession>Q31Q60</accession>
<protein>
    <recommendedName>
        <fullName evidence="1">Bifunctional protein FolD</fullName>
    </recommendedName>
    <domain>
        <recommendedName>
            <fullName evidence="1">Methylenetetrahydrofolate dehydrogenase</fullName>
            <ecNumber evidence="1">1.5.1.5</ecNumber>
        </recommendedName>
    </domain>
    <domain>
        <recommendedName>
            <fullName evidence="1">Methenyltetrahydrofolate cyclohydrolase</fullName>
            <ecNumber evidence="1">3.5.4.9</ecNumber>
        </recommendedName>
    </domain>
</protein>
<feature type="chain" id="PRO_0000268536" description="Bifunctional protein FolD">
    <location>
        <begin position="1"/>
        <end position="289"/>
    </location>
</feature>
<feature type="binding site" evidence="1">
    <location>
        <begin position="166"/>
        <end position="168"/>
    </location>
    <ligand>
        <name>NADP(+)</name>
        <dbReference type="ChEBI" id="CHEBI:58349"/>
    </ligand>
</feature>
<feature type="binding site" evidence="1">
    <location>
        <position position="191"/>
    </location>
    <ligand>
        <name>NADP(+)</name>
        <dbReference type="ChEBI" id="CHEBI:58349"/>
    </ligand>
</feature>
<feature type="binding site" evidence="1">
    <location>
        <position position="232"/>
    </location>
    <ligand>
        <name>NADP(+)</name>
        <dbReference type="ChEBI" id="CHEBI:58349"/>
    </ligand>
</feature>
<evidence type="ECO:0000255" key="1">
    <source>
        <dbReference type="HAMAP-Rule" id="MF_01576"/>
    </source>
</evidence>
<sequence>MAAAILDGRALAAQRRQQLREQVEAIAPAVGRRPGLAVIMVGDNPASAVYVRNKERACEQTGIVSFGKHLPGDSSEAEIRALIEELNQDDRVDGILVQLPLPSHLDAVPLLLAIDPEKDADGLHPLNLGRLLRGEEGLRSCTPAGVMELLAANQIDPAGKKAVVIGRSILVGKPLAMMLLEANATVTIAHSRTPNLPEVCRQADIVVAAVGRPELVGADWIKPGAVVVDVGINRLEDGRLVGDVDYEAASAITSWITPVPGGVGPMTVAMLLHNTVLSYCRRSGQPFLS</sequence>
<gene>
    <name evidence="1" type="primary">folD</name>
    <name type="ordered locus">Synpcc7942_0777</name>
</gene>
<proteinExistence type="inferred from homology"/>
<comment type="function">
    <text evidence="1">Catalyzes the oxidation of 5,10-methylenetetrahydrofolate to 5,10-methenyltetrahydrofolate and then the hydrolysis of 5,10-methenyltetrahydrofolate to 10-formyltetrahydrofolate.</text>
</comment>
<comment type="catalytic activity">
    <reaction evidence="1">
        <text>(6R)-5,10-methylene-5,6,7,8-tetrahydrofolate + NADP(+) = (6R)-5,10-methenyltetrahydrofolate + NADPH</text>
        <dbReference type="Rhea" id="RHEA:22812"/>
        <dbReference type="ChEBI" id="CHEBI:15636"/>
        <dbReference type="ChEBI" id="CHEBI:57455"/>
        <dbReference type="ChEBI" id="CHEBI:57783"/>
        <dbReference type="ChEBI" id="CHEBI:58349"/>
        <dbReference type="EC" id="1.5.1.5"/>
    </reaction>
</comment>
<comment type="catalytic activity">
    <reaction evidence="1">
        <text>(6R)-5,10-methenyltetrahydrofolate + H2O = (6R)-10-formyltetrahydrofolate + H(+)</text>
        <dbReference type="Rhea" id="RHEA:23700"/>
        <dbReference type="ChEBI" id="CHEBI:15377"/>
        <dbReference type="ChEBI" id="CHEBI:15378"/>
        <dbReference type="ChEBI" id="CHEBI:57455"/>
        <dbReference type="ChEBI" id="CHEBI:195366"/>
        <dbReference type="EC" id="3.5.4.9"/>
    </reaction>
</comment>
<comment type="pathway">
    <text evidence="1">One-carbon metabolism; tetrahydrofolate interconversion.</text>
</comment>
<comment type="subunit">
    <text evidence="1">Homodimer.</text>
</comment>
<comment type="similarity">
    <text evidence="1">Belongs to the tetrahydrofolate dehydrogenase/cyclohydrolase family.</text>
</comment>
<reference key="1">
    <citation type="submission" date="2005-08" db="EMBL/GenBank/DDBJ databases">
        <title>Complete sequence of chromosome 1 of Synechococcus elongatus PCC 7942.</title>
        <authorList>
            <consortium name="US DOE Joint Genome Institute"/>
            <person name="Copeland A."/>
            <person name="Lucas S."/>
            <person name="Lapidus A."/>
            <person name="Barry K."/>
            <person name="Detter J.C."/>
            <person name="Glavina T."/>
            <person name="Hammon N."/>
            <person name="Israni S."/>
            <person name="Pitluck S."/>
            <person name="Schmutz J."/>
            <person name="Larimer F."/>
            <person name="Land M."/>
            <person name="Kyrpides N."/>
            <person name="Lykidis A."/>
            <person name="Golden S."/>
            <person name="Richardson P."/>
        </authorList>
    </citation>
    <scope>NUCLEOTIDE SEQUENCE [LARGE SCALE GENOMIC DNA]</scope>
    <source>
        <strain>ATCC 33912 / PCC 7942 / FACHB-805</strain>
    </source>
</reference>
<dbReference type="EC" id="1.5.1.5" evidence="1"/>
<dbReference type="EC" id="3.5.4.9" evidence="1"/>
<dbReference type="EMBL" id="CP000100">
    <property type="protein sequence ID" value="ABB56809.1"/>
    <property type="molecule type" value="Genomic_DNA"/>
</dbReference>
<dbReference type="RefSeq" id="WP_011377721.1">
    <property type="nucleotide sequence ID" value="NZ_JACJTX010000005.1"/>
</dbReference>
<dbReference type="SMR" id="Q31Q60"/>
<dbReference type="STRING" id="1140.Synpcc7942_0777"/>
<dbReference type="PaxDb" id="1140-Synpcc7942_0777"/>
<dbReference type="GeneID" id="72429623"/>
<dbReference type="KEGG" id="syf:Synpcc7942_0777"/>
<dbReference type="eggNOG" id="COG0190">
    <property type="taxonomic scope" value="Bacteria"/>
</dbReference>
<dbReference type="HOGENOM" id="CLU_034045_2_1_3"/>
<dbReference type="OrthoDB" id="9803580at2"/>
<dbReference type="BioCyc" id="SYNEL:SYNPCC7942_0777-MONOMER"/>
<dbReference type="UniPathway" id="UPA00193"/>
<dbReference type="Proteomes" id="UP000889800">
    <property type="component" value="Chromosome"/>
</dbReference>
<dbReference type="GO" id="GO:0005829">
    <property type="term" value="C:cytosol"/>
    <property type="evidence" value="ECO:0007669"/>
    <property type="project" value="TreeGrafter"/>
</dbReference>
<dbReference type="GO" id="GO:0004477">
    <property type="term" value="F:methenyltetrahydrofolate cyclohydrolase activity"/>
    <property type="evidence" value="ECO:0007669"/>
    <property type="project" value="UniProtKB-UniRule"/>
</dbReference>
<dbReference type="GO" id="GO:0004488">
    <property type="term" value="F:methylenetetrahydrofolate dehydrogenase (NADP+) activity"/>
    <property type="evidence" value="ECO:0007669"/>
    <property type="project" value="UniProtKB-UniRule"/>
</dbReference>
<dbReference type="GO" id="GO:0000105">
    <property type="term" value="P:L-histidine biosynthetic process"/>
    <property type="evidence" value="ECO:0007669"/>
    <property type="project" value="UniProtKB-KW"/>
</dbReference>
<dbReference type="GO" id="GO:0009086">
    <property type="term" value="P:methionine biosynthetic process"/>
    <property type="evidence" value="ECO:0007669"/>
    <property type="project" value="UniProtKB-KW"/>
</dbReference>
<dbReference type="GO" id="GO:0006164">
    <property type="term" value="P:purine nucleotide biosynthetic process"/>
    <property type="evidence" value="ECO:0007669"/>
    <property type="project" value="UniProtKB-KW"/>
</dbReference>
<dbReference type="GO" id="GO:0035999">
    <property type="term" value="P:tetrahydrofolate interconversion"/>
    <property type="evidence" value="ECO:0007669"/>
    <property type="project" value="UniProtKB-UniRule"/>
</dbReference>
<dbReference type="CDD" id="cd01080">
    <property type="entry name" value="NAD_bind_m-THF_DH_Cyclohyd"/>
    <property type="match status" value="1"/>
</dbReference>
<dbReference type="FunFam" id="3.40.50.720:FF:000094">
    <property type="entry name" value="Bifunctional protein FolD"/>
    <property type="match status" value="1"/>
</dbReference>
<dbReference type="FunFam" id="3.40.50.10860:FF:000005">
    <property type="entry name" value="C-1-tetrahydrofolate synthase, cytoplasmic, putative"/>
    <property type="match status" value="1"/>
</dbReference>
<dbReference type="Gene3D" id="3.40.50.10860">
    <property type="entry name" value="Leucine Dehydrogenase, chain A, domain 1"/>
    <property type="match status" value="1"/>
</dbReference>
<dbReference type="Gene3D" id="3.40.50.720">
    <property type="entry name" value="NAD(P)-binding Rossmann-like Domain"/>
    <property type="match status" value="1"/>
</dbReference>
<dbReference type="HAMAP" id="MF_01576">
    <property type="entry name" value="THF_DHG_CYH"/>
    <property type="match status" value="1"/>
</dbReference>
<dbReference type="InterPro" id="IPR046346">
    <property type="entry name" value="Aminoacid_DH-like_N_sf"/>
</dbReference>
<dbReference type="InterPro" id="IPR036291">
    <property type="entry name" value="NAD(P)-bd_dom_sf"/>
</dbReference>
<dbReference type="InterPro" id="IPR000672">
    <property type="entry name" value="THF_DH/CycHdrlase"/>
</dbReference>
<dbReference type="InterPro" id="IPR020630">
    <property type="entry name" value="THF_DH/CycHdrlase_cat_dom"/>
</dbReference>
<dbReference type="InterPro" id="IPR020867">
    <property type="entry name" value="THF_DH/CycHdrlase_CS"/>
</dbReference>
<dbReference type="InterPro" id="IPR020631">
    <property type="entry name" value="THF_DH/CycHdrlase_NAD-bd_dom"/>
</dbReference>
<dbReference type="NCBIfam" id="NF008058">
    <property type="entry name" value="PRK10792.1"/>
    <property type="match status" value="1"/>
</dbReference>
<dbReference type="NCBIfam" id="NF010783">
    <property type="entry name" value="PRK14186.1"/>
    <property type="match status" value="1"/>
</dbReference>
<dbReference type="PANTHER" id="PTHR48099:SF5">
    <property type="entry name" value="C-1-TETRAHYDROFOLATE SYNTHASE, CYTOPLASMIC"/>
    <property type="match status" value="1"/>
</dbReference>
<dbReference type="PANTHER" id="PTHR48099">
    <property type="entry name" value="C-1-TETRAHYDROFOLATE SYNTHASE, CYTOPLASMIC-RELATED"/>
    <property type="match status" value="1"/>
</dbReference>
<dbReference type="Pfam" id="PF00763">
    <property type="entry name" value="THF_DHG_CYH"/>
    <property type="match status" value="1"/>
</dbReference>
<dbReference type="Pfam" id="PF02882">
    <property type="entry name" value="THF_DHG_CYH_C"/>
    <property type="match status" value="1"/>
</dbReference>
<dbReference type="PRINTS" id="PR00085">
    <property type="entry name" value="THFDHDRGNASE"/>
</dbReference>
<dbReference type="SUPFAM" id="SSF53223">
    <property type="entry name" value="Aminoacid dehydrogenase-like, N-terminal domain"/>
    <property type="match status" value="1"/>
</dbReference>
<dbReference type="SUPFAM" id="SSF51735">
    <property type="entry name" value="NAD(P)-binding Rossmann-fold domains"/>
    <property type="match status" value="1"/>
</dbReference>
<dbReference type="PROSITE" id="PS00767">
    <property type="entry name" value="THF_DHG_CYH_2"/>
    <property type="match status" value="1"/>
</dbReference>
<name>FOLD_SYNE7</name>
<keyword id="KW-0028">Amino-acid biosynthesis</keyword>
<keyword id="KW-0368">Histidine biosynthesis</keyword>
<keyword id="KW-0378">Hydrolase</keyword>
<keyword id="KW-0486">Methionine biosynthesis</keyword>
<keyword id="KW-0511">Multifunctional enzyme</keyword>
<keyword id="KW-0521">NADP</keyword>
<keyword id="KW-0554">One-carbon metabolism</keyword>
<keyword id="KW-0560">Oxidoreductase</keyword>
<keyword id="KW-0658">Purine biosynthesis</keyword>
<keyword id="KW-1185">Reference proteome</keyword>